<organism>
    <name type="scientific">Streptococcus pyogenes serotype M1</name>
    <dbReference type="NCBI Taxonomy" id="301447"/>
    <lineage>
        <taxon>Bacteria</taxon>
        <taxon>Bacillati</taxon>
        <taxon>Bacillota</taxon>
        <taxon>Bacilli</taxon>
        <taxon>Lactobacillales</taxon>
        <taxon>Streptococcaceae</taxon>
        <taxon>Streptococcus</taxon>
    </lineage>
</organism>
<sequence>MSRIGNKVITMPAGVELTNNNNVITVKGPKGELTREFNKNIEIKVEGTEITVVRPNDSKEMKTIHGTTRANLNNMVVGVSEGFKKDLEMKGVGYRAQLQGTKLVLSVGKSHQDEVEAPEGITFTVANPTSISVEGINKEVVGQTAAYIRSLRSPEPYKGKGIRYVGEYVRLKEGKTGK</sequence>
<evidence type="ECO:0000255" key="1">
    <source>
        <dbReference type="HAMAP-Rule" id="MF_01365"/>
    </source>
</evidence>
<evidence type="ECO:0000305" key="2"/>
<feature type="chain" id="PRO_0000260946" description="Large ribosomal subunit protein uL6">
    <location>
        <begin position="1"/>
        <end position="178"/>
    </location>
</feature>
<protein>
    <recommendedName>
        <fullName evidence="1">Large ribosomal subunit protein uL6</fullName>
    </recommendedName>
    <alternativeName>
        <fullName evidence="2">50S ribosomal protein L6</fullName>
    </alternativeName>
</protein>
<proteinExistence type="inferred from homology"/>
<name>RL6_STRP1</name>
<dbReference type="EMBL" id="AE004092">
    <property type="protein sequence ID" value="AAK33197.1"/>
    <property type="molecule type" value="Genomic_DNA"/>
</dbReference>
<dbReference type="EMBL" id="CP000017">
    <property type="protein sequence ID" value="AAZ50678.1"/>
    <property type="molecule type" value="Genomic_DNA"/>
</dbReference>
<dbReference type="RefSeq" id="NP_268475.1">
    <property type="nucleotide sequence ID" value="NC_002737.2"/>
</dbReference>
<dbReference type="SMR" id="Q9A1V9"/>
<dbReference type="PaxDb" id="1314-HKU360_00092"/>
<dbReference type="KEGG" id="spy:SPy_0066"/>
<dbReference type="KEGG" id="spz:M5005_Spy0059"/>
<dbReference type="PATRIC" id="fig|160490.10.peg.59"/>
<dbReference type="HOGENOM" id="CLU_065464_1_2_9"/>
<dbReference type="OMA" id="RERHGLC"/>
<dbReference type="PRO" id="PR:Q9A1V9"/>
<dbReference type="Proteomes" id="UP000000750">
    <property type="component" value="Chromosome"/>
</dbReference>
<dbReference type="GO" id="GO:0022625">
    <property type="term" value="C:cytosolic large ribosomal subunit"/>
    <property type="evidence" value="ECO:0007669"/>
    <property type="project" value="TreeGrafter"/>
</dbReference>
<dbReference type="GO" id="GO:0019843">
    <property type="term" value="F:rRNA binding"/>
    <property type="evidence" value="ECO:0007669"/>
    <property type="project" value="UniProtKB-UniRule"/>
</dbReference>
<dbReference type="GO" id="GO:0003735">
    <property type="term" value="F:structural constituent of ribosome"/>
    <property type="evidence" value="ECO:0007669"/>
    <property type="project" value="InterPro"/>
</dbReference>
<dbReference type="GO" id="GO:0002181">
    <property type="term" value="P:cytoplasmic translation"/>
    <property type="evidence" value="ECO:0007669"/>
    <property type="project" value="TreeGrafter"/>
</dbReference>
<dbReference type="FunFam" id="3.90.930.12:FF:000001">
    <property type="entry name" value="50S ribosomal protein L6"/>
    <property type="match status" value="1"/>
</dbReference>
<dbReference type="FunFam" id="3.90.930.12:FF:000002">
    <property type="entry name" value="50S ribosomal protein L6"/>
    <property type="match status" value="1"/>
</dbReference>
<dbReference type="Gene3D" id="3.90.930.12">
    <property type="entry name" value="Ribosomal protein L6, alpha-beta domain"/>
    <property type="match status" value="2"/>
</dbReference>
<dbReference type="HAMAP" id="MF_01365_B">
    <property type="entry name" value="Ribosomal_uL6_B"/>
    <property type="match status" value="1"/>
</dbReference>
<dbReference type="InterPro" id="IPR000702">
    <property type="entry name" value="Ribosomal_uL6-like"/>
</dbReference>
<dbReference type="InterPro" id="IPR036789">
    <property type="entry name" value="Ribosomal_uL6-like_a/b-dom_sf"/>
</dbReference>
<dbReference type="InterPro" id="IPR020040">
    <property type="entry name" value="Ribosomal_uL6_a/b-dom"/>
</dbReference>
<dbReference type="InterPro" id="IPR019906">
    <property type="entry name" value="Ribosomal_uL6_bac-type"/>
</dbReference>
<dbReference type="InterPro" id="IPR002358">
    <property type="entry name" value="Ribosomal_uL6_CS"/>
</dbReference>
<dbReference type="NCBIfam" id="TIGR03654">
    <property type="entry name" value="L6_bact"/>
    <property type="match status" value="1"/>
</dbReference>
<dbReference type="PANTHER" id="PTHR11655">
    <property type="entry name" value="60S/50S RIBOSOMAL PROTEIN L6/L9"/>
    <property type="match status" value="1"/>
</dbReference>
<dbReference type="PANTHER" id="PTHR11655:SF14">
    <property type="entry name" value="LARGE RIBOSOMAL SUBUNIT PROTEIN UL6M"/>
    <property type="match status" value="1"/>
</dbReference>
<dbReference type="Pfam" id="PF00347">
    <property type="entry name" value="Ribosomal_L6"/>
    <property type="match status" value="2"/>
</dbReference>
<dbReference type="PIRSF" id="PIRSF002162">
    <property type="entry name" value="Ribosomal_L6"/>
    <property type="match status" value="1"/>
</dbReference>
<dbReference type="PRINTS" id="PR00059">
    <property type="entry name" value="RIBOSOMALL6"/>
</dbReference>
<dbReference type="SUPFAM" id="SSF56053">
    <property type="entry name" value="Ribosomal protein L6"/>
    <property type="match status" value="2"/>
</dbReference>
<dbReference type="PROSITE" id="PS00525">
    <property type="entry name" value="RIBOSOMAL_L6_1"/>
    <property type="match status" value="1"/>
</dbReference>
<accession>Q9A1V9</accession>
<accession>Q491P0</accession>
<reference key="1">
    <citation type="journal article" date="2001" name="Proc. Natl. Acad. Sci. U.S.A.">
        <title>Complete genome sequence of an M1 strain of Streptococcus pyogenes.</title>
        <authorList>
            <person name="Ferretti J.J."/>
            <person name="McShan W.M."/>
            <person name="Ajdic D.J."/>
            <person name="Savic D.J."/>
            <person name="Savic G."/>
            <person name="Lyon K."/>
            <person name="Primeaux C."/>
            <person name="Sezate S."/>
            <person name="Suvorov A.N."/>
            <person name="Kenton S."/>
            <person name="Lai H.S."/>
            <person name="Lin S.P."/>
            <person name="Qian Y."/>
            <person name="Jia H.G."/>
            <person name="Najar F.Z."/>
            <person name="Ren Q."/>
            <person name="Zhu H."/>
            <person name="Song L."/>
            <person name="White J."/>
            <person name="Yuan X."/>
            <person name="Clifton S.W."/>
            <person name="Roe B.A."/>
            <person name="McLaughlin R.E."/>
        </authorList>
    </citation>
    <scope>NUCLEOTIDE SEQUENCE [LARGE SCALE GENOMIC DNA]</scope>
    <source>
        <strain>ATCC 700294 / SF370 / Serotype M1</strain>
    </source>
</reference>
<reference key="2">
    <citation type="journal article" date="2005" name="J. Infect. Dis.">
        <title>Evolutionary origin and emergence of a highly successful clone of serotype M1 group A Streptococcus involved multiple horizontal gene transfer events.</title>
        <authorList>
            <person name="Sumby P."/>
            <person name="Porcella S.F."/>
            <person name="Madrigal A.G."/>
            <person name="Barbian K.D."/>
            <person name="Virtaneva K."/>
            <person name="Ricklefs S.M."/>
            <person name="Sturdevant D.E."/>
            <person name="Graham M.R."/>
            <person name="Vuopio-Varkila J."/>
            <person name="Hoe N.P."/>
            <person name="Musser J.M."/>
        </authorList>
    </citation>
    <scope>NUCLEOTIDE SEQUENCE [LARGE SCALE GENOMIC DNA]</scope>
    <source>
        <strain>ATCC BAA-947 / MGAS5005 / Serotype M1</strain>
    </source>
</reference>
<keyword id="KW-1185">Reference proteome</keyword>
<keyword id="KW-0687">Ribonucleoprotein</keyword>
<keyword id="KW-0689">Ribosomal protein</keyword>
<keyword id="KW-0694">RNA-binding</keyword>
<keyword id="KW-0699">rRNA-binding</keyword>
<gene>
    <name evidence="1" type="primary">rplF</name>
    <name type="ordered locus">SPy_0066</name>
    <name type="ordered locus">M5005_Spy0059</name>
</gene>
<comment type="function">
    <text evidence="1">This protein binds to the 23S rRNA, and is important in its secondary structure. It is located near the subunit interface in the base of the L7/L12 stalk, and near the tRNA binding site of the peptidyltransferase center.</text>
</comment>
<comment type="subunit">
    <text evidence="1">Part of the 50S ribosomal subunit.</text>
</comment>
<comment type="similarity">
    <text evidence="1">Belongs to the universal ribosomal protein uL6 family.</text>
</comment>